<reference key="1">
    <citation type="journal article" date="2015" name="Proc. Natl. Acad. Sci. U.S.A.">
        <title>Trichodesmium genome maintains abundant, widespread noncoding DNA in situ, despite oligotrophic lifestyle.</title>
        <authorList>
            <person name="Walworth N."/>
            <person name="Pfreundt U."/>
            <person name="Nelson W.C."/>
            <person name="Mincer T."/>
            <person name="Heidelberg J.F."/>
            <person name="Fu F."/>
            <person name="Waterbury J.B."/>
            <person name="Glavina del Rio T."/>
            <person name="Goodwin L."/>
            <person name="Kyrpides N.C."/>
            <person name="Land M.L."/>
            <person name="Woyke T."/>
            <person name="Hutchins D.A."/>
            <person name="Hess W.R."/>
            <person name="Webb E.A."/>
        </authorList>
    </citation>
    <scope>NUCLEOTIDE SEQUENCE [LARGE SCALE GENOMIC DNA]</scope>
    <source>
        <strain>IMS101</strain>
    </source>
</reference>
<evidence type="ECO:0000255" key="1">
    <source>
        <dbReference type="HAMAP-Rule" id="MF_00156"/>
    </source>
</evidence>
<sequence length="263" mass="28403">MAVTTKQLIQWKQKGRPIVALTAYDYTIAQLLDNAGVDLILVGDSLGMVTLGYETTLPVTLEEMIHHAKAVRRAVKQALMVVDLPFLTYQESPQQAIHSAGRILKETGAQAVKLESGNEAIAQTVKKLTSIGIPVMGHIGLIPQSVHQFGGYPQQGNAPDASARILTEALALAEAGAFALVLEHIKADLAKEITEKVSIPTIGIGAGAYCDGQILVINDVLGLSHWQPPFAKPYVNLRETITQAVKEYSLEVKKRKFPQPPSP</sequence>
<comment type="function">
    <text evidence="1">Catalyzes the reversible reaction in which hydroxymethyl group from 5,10-methylenetetrahydrofolate is transferred onto alpha-ketoisovalerate to form ketopantoate.</text>
</comment>
<comment type="catalytic activity">
    <reaction evidence="1">
        <text>3-methyl-2-oxobutanoate + (6R)-5,10-methylene-5,6,7,8-tetrahydrofolate + H2O = 2-dehydropantoate + (6S)-5,6,7,8-tetrahydrofolate</text>
        <dbReference type="Rhea" id="RHEA:11824"/>
        <dbReference type="ChEBI" id="CHEBI:11561"/>
        <dbReference type="ChEBI" id="CHEBI:11851"/>
        <dbReference type="ChEBI" id="CHEBI:15377"/>
        <dbReference type="ChEBI" id="CHEBI:15636"/>
        <dbReference type="ChEBI" id="CHEBI:57453"/>
        <dbReference type="EC" id="2.1.2.11"/>
    </reaction>
</comment>
<comment type="cofactor">
    <cofactor evidence="1">
        <name>Mg(2+)</name>
        <dbReference type="ChEBI" id="CHEBI:18420"/>
    </cofactor>
    <text evidence="1">Binds 1 Mg(2+) ion per subunit.</text>
</comment>
<comment type="pathway">
    <text evidence="1">Cofactor biosynthesis; (R)-pantothenate biosynthesis; (R)-pantoate from 3-methyl-2-oxobutanoate: step 1/2.</text>
</comment>
<comment type="subunit">
    <text evidence="1">Homodecamer; pentamer of dimers.</text>
</comment>
<comment type="subcellular location">
    <subcellularLocation>
        <location evidence="1">Cytoplasm</location>
    </subcellularLocation>
</comment>
<comment type="similarity">
    <text evidence="1">Belongs to the PanB family.</text>
</comment>
<protein>
    <recommendedName>
        <fullName evidence="1">3-methyl-2-oxobutanoate hydroxymethyltransferase</fullName>
        <ecNumber evidence="1">2.1.2.11</ecNumber>
    </recommendedName>
    <alternativeName>
        <fullName evidence="1">Ketopantoate hydroxymethyltransferase</fullName>
        <shortName evidence="1">KPHMT</shortName>
    </alternativeName>
</protein>
<organism>
    <name type="scientific">Trichodesmium erythraeum (strain IMS101)</name>
    <dbReference type="NCBI Taxonomy" id="203124"/>
    <lineage>
        <taxon>Bacteria</taxon>
        <taxon>Bacillati</taxon>
        <taxon>Cyanobacteriota</taxon>
        <taxon>Cyanophyceae</taxon>
        <taxon>Oscillatoriophycideae</taxon>
        <taxon>Oscillatoriales</taxon>
        <taxon>Microcoleaceae</taxon>
        <taxon>Trichodesmium</taxon>
    </lineage>
</organism>
<feature type="chain" id="PRO_0000297403" description="3-methyl-2-oxobutanoate hydroxymethyltransferase">
    <location>
        <begin position="1"/>
        <end position="263"/>
    </location>
</feature>
<feature type="active site" description="Proton acceptor" evidence="1">
    <location>
        <position position="183"/>
    </location>
</feature>
<feature type="binding site" evidence="1">
    <location>
        <begin position="44"/>
        <end position="45"/>
    </location>
    <ligand>
        <name>3-methyl-2-oxobutanoate</name>
        <dbReference type="ChEBI" id="CHEBI:11851"/>
    </ligand>
</feature>
<feature type="binding site" evidence="1">
    <location>
        <position position="44"/>
    </location>
    <ligand>
        <name>Mg(2+)</name>
        <dbReference type="ChEBI" id="CHEBI:18420"/>
    </ligand>
</feature>
<feature type="binding site" evidence="1">
    <location>
        <position position="83"/>
    </location>
    <ligand>
        <name>3-methyl-2-oxobutanoate</name>
        <dbReference type="ChEBI" id="CHEBI:11851"/>
    </ligand>
</feature>
<feature type="binding site" evidence="1">
    <location>
        <position position="83"/>
    </location>
    <ligand>
        <name>Mg(2+)</name>
        <dbReference type="ChEBI" id="CHEBI:18420"/>
    </ligand>
</feature>
<feature type="binding site" evidence="1">
    <location>
        <position position="113"/>
    </location>
    <ligand>
        <name>3-methyl-2-oxobutanoate</name>
        <dbReference type="ChEBI" id="CHEBI:11851"/>
    </ligand>
</feature>
<feature type="binding site" evidence="1">
    <location>
        <position position="115"/>
    </location>
    <ligand>
        <name>Mg(2+)</name>
        <dbReference type="ChEBI" id="CHEBI:18420"/>
    </ligand>
</feature>
<dbReference type="EC" id="2.1.2.11" evidence="1"/>
<dbReference type="EMBL" id="CP000393">
    <property type="protein sequence ID" value="ABG53411.1"/>
    <property type="molecule type" value="Genomic_DNA"/>
</dbReference>
<dbReference type="RefSeq" id="WP_011613736.1">
    <property type="nucleotide sequence ID" value="NC_008312.1"/>
</dbReference>
<dbReference type="SMR" id="Q10WG3"/>
<dbReference type="STRING" id="203124.Tery_4423"/>
<dbReference type="KEGG" id="ter:Tery_4423"/>
<dbReference type="eggNOG" id="COG0413">
    <property type="taxonomic scope" value="Bacteria"/>
</dbReference>
<dbReference type="HOGENOM" id="CLU_036645_1_0_3"/>
<dbReference type="OrthoDB" id="9781789at2"/>
<dbReference type="UniPathway" id="UPA00028">
    <property type="reaction ID" value="UER00003"/>
</dbReference>
<dbReference type="GO" id="GO:0005737">
    <property type="term" value="C:cytoplasm"/>
    <property type="evidence" value="ECO:0007669"/>
    <property type="project" value="UniProtKB-SubCell"/>
</dbReference>
<dbReference type="GO" id="GO:0003864">
    <property type="term" value="F:3-methyl-2-oxobutanoate hydroxymethyltransferase activity"/>
    <property type="evidence" value="ECO:0007669"/>
    <property type="project" value="UniProtKB-UniRule"/>
</dbReference>
<dbReference type="GO" id="GO:0000287">
    <property type="term" value="F:magnesium ion binding"/>
    <property type="evidence" value="ECO:0007669"/>
    <property type="project" value="TreeGrafter"/>
</dbReference>
<dbReference type="GO" id="GO:0015940">
    <property type="term" value="P:pantothenate biosynthetic process"/>
    <property type="evidence" value="ECO:0007669"/>
    <property type="project" value="UniProtKB-UniRule"/>
</dbReference>
<dbReference type="CDD" id="cd06557">
    <property type="entry name" value="KPHMT-like"/>
    <property type="match status" value="1"/>
</dbReference>
<dbReference type="FunFam" id="3.20.20.60:FF:000003">
    <property type="entry name" value="3-methyl-2-oxobutanoate hydroxymethyltransferase"/>
    <property type="match status" value="1"/>
</dbReference>
<dbReference type="Gene3D" id="3.20.20.60">
    <property type="entry name" value="Phosphoenolpyruvate-binding domains"/>
    <property type="match status" value="1"/>
</dbReference>
<dbReference type="HAMAP" id="MF_00156">
    <property type="entry name" value="PanB"/>
    <property type="match status" value="1"/>
</dbReference>
<dbReference type="InterPro" id="IPR003700">
    <property type="entry name" value="Pantoate_hydroxy_MeTrfase"/>
</dbReference>
<dbReference type="InterPro" id="IPR015813">
    <property type="entry name" value="Pyrv/PenolPyrv_kinase-like_dom"/>
</dbReference>
<dbReference type="InterPro" id="IPR040442">
    <property type="entry name" value="Pyrv_kinase-like_dom_sf"/>
</dbReference>
<dbReference type="NCBIfam" id="TIGR00222">
    <property type="entry name" value="panB"/>
    <property type="match status" value="1"/>
</dbReference>
<dbReference type="NCBIfam" id="NF001452">
    <property type="entry name" value="PRK00311.1"/>
    <property type="match status" value="1"/>
</dbReference>
<dbReference type="PANTHER" id="PTHR20881">
    <property type="entry name" value="3-METHYL-2-OXOBUTANOATE HYDROXYMETHYLTRANSFERASE"/>
    <property type="match status" value="1"/>
</dbReference>
<dbReference type="PANTHER" id="PTHR20881:SF0">
    <property type="entry name" value="3-METHYL-2-OXOBUTANOATE HYDROXYMETHYLTRANSFERASE"/>
    <property type="match status" value="1"/>
</dbReference>
<dbReference type="Pfam" id="PF02548">
    <property type="entry name" value="Pantoate_transf"/>
    <property type="match status" value="1"/>
</dbReference>
<dbReference type="PIRSF" id="PIRSF000388">
    <property type="entry name" value="Pantoate_hydroxy_MeTrfase"/>
    <property type="match status" value="1"/>
</dbReference>
<dbReference type="SUPFAM" id="SSF51621">
    <property type="entry name" value="Phosphoenolpyruvate/pyruvate domain"/>
    <property type="match status" value="1"/>
</dbReference>
<name>PANB_TRIEI</name>
<gene>
    <name evidence="1" type="primary">panB</name>
    <name type="ordered locus">Tery_4423</name>
</gene>
<proteinExistence type="inferred from homology"/>
<accession>Q10WG3</accession>
<keyword id="KW-0963">Cytoplasm</keyword>
<keyword id="KW-0460">Magnesium</keyword>
<keyword id="KW-0479">Metal-binding</keyword>
<keyword id="KW-0566">Pantothenate biosynthesis</keyword>
<keyword id="KW-0808">Transferase</keyword>